<sequence length="239" mass="26350">MRLDYLSIFPAYFDVLDISLLGKAAVNGLVEVHAHDLRDWTHDRHRTVDDTPCGGGAGMVMKPDPWGEAFDEIIGTEPDSSVHVIFPSPSGAPFTQSAAQELSSAVRIVFCCGRYEGIDHRVIDYARSMWTVHEVSLGDYVLNGGEVAALAITEAVVRLVPGFMGNPESLAEESFSAGQDGLLEYPLFTRPVSWRGLDVPEVLMSGHHGRIAKWRRDESVRLTCERRPDLTDSDFGVPH</sequence>
<name>TRMD_CUTAK</name>
<accession>Q6A7S7</accession>
<proteinExistence type="inferred from homology"/>
<keyword id="KW-0963">Cytoplasm</keyword>
<keyword id="KW-0489">Methyltransferase</keyword>
<keyword id="KW-0949">S-adenosyl-L-methionine</keyword>
<keyword id="KW-0808">Transferase</keyword>
<keyword id="KW-0819">tRNA processing</keyword>
<organism>
    <name type="scientific">Cutibacterium acnes (strain DSM 16379 / KPA171202)</name>
    <name type="common">Propionibacterium acnes</name>
    <dbReference type="NCBI Taxonomy" id="267747"/>
    <lineage>
        <taxon>Bacteria</taxon>
        <taxon>Bacillati</taxon>
        <taxon>Actinomycetota</taxon>
        <taxon>Actinomycetes</taxon>
        <taxon>Propionibacteriales</taxon>
        <taxon>Propionibacteriaceae</taxon>
        <taxon>Cutibacterium</taxon>
    </lineage>
</organism>
<dbReference type="EC" id="2.1.1.228" evidence="1"/>
<dbReference type="EMBL" id="AE017283">
    <property type="protein sequence ID" value="AAT83188.1"/>
    <property type="molecule type" value="Genomic_DNA"/>
</dbReference>
<dbReference type="RefSeq" id="WP_002519327.1">
    <property type="nucleotide sequence ID" value="NZ_CP025935.1"/>
</dbReference>
<dbReference type="SMR" id="Q6A7S7"/>
<dbReference type="EnsemblBacteria" id="AAT83188">
    <property type="protein sequence ID" value="AAT83188"/>
    <property type="gene ID" value="PPA1440"/>
</dbReference>
<dbReference type="GeneID" id="92857415"/>
<dbReference type="KEGG" id="pac:PPA1440"/>
<dbReference type="eggNOG" id="COG0336">
    <property type="taxonomic scope" value="Bacteria"/>
</dbReference>
<dbReference type="HOGENOM" id="CLU_047363_0_0_11"/>
<dbReference type="Proteomes" id="UP000000603">
    <property type="component" value="Chromosome"/>
</dbReference>
<dbReference type="GO" id="GO:0005829">
    <property type="term" value="C:cytosol"/>
    <property type="evidence" value="ECO:0007669"/>
    <property type="project" value="TreeGrafter"/>
</dbReference>
<dbReference type="GO" id="GO:0052906">
    <property type="term" value="F:tRNA (guanine(37)-N1)-methyltransferase activity"/>
    <property type="evidence" value="ECO:0007669"/>
    <property type="project" value="UniProtKB-UniRule"/>
</dbReference>
<dbReference type="GO" id="GO:0002939">
    <property type="term" value="P:tRNA N1-guanine methylation"/>
    <property type="evidence" value="ECO:0007669"/>
    <property type="project" value="TreeGrafter"/>
</dbReference>
<dbReference type="CDD" id="cd18080">
    <property type="entry name" value="TrmD-like"/>
    <property type="match status" value="1"/>
</dbReference>
<dbReference type="FunFam" id="3.40.1280.10:FF:000001">
    <property type="entry name" value="tRNA (guanine-N(1)-)-methyltransferase"/>
    <property type="match status" value="1"/>
</dbReference>
<dbReference type="Gene3D" id="3.40.1280.10">
    <property type="match status" value="1"/>
</dbReference>
<dbReference type="Gene3D" id="1.10.1270.20">
    <property type="entry name" value="tRNA(m1g37)methyltransferase, domain 2"/>
    <property type="match status" value="1"/>
</dbReference>
<dbReference type="HAMAP" id="MF_00605">
    <property type="entry name" value="TrmD"/>
    <property type="match status" value="1"/>
</dbReference>
<dbReference type="InterPro" id="IPR029028">
    <property type="entry name" value="Alpha/beta_knot_MTases"/>
</dbReference>
<dbReference type="InterPro" id="IPR023148">
    <property type="entry name" value="tRNA_m1G_MeTrfase_C_sf"/>
</dbReference>
<dbReference type="InterPro" id="IPR002649">
    <property type="entry name" value="tRNA_m1G_MeTrfase_TrmD"/>
</dbReference>
<dbReference type="InterPro" id="IPR029026">
    <property type="entry name" value="tRNA_m1G_MTases_N"/>
</dbReference>
<dbReference type="InterPro" id="IPR016009">
    <property type="entry name" value="tRNA_MeTrfase_TRMD/TRM10"/>
</dbReference>
<dbReference type="NCBIfam" id="NF000648">
    <property type="entry name" value="PRK00026.1"/>
    <property type="match status" value="1"/>
</dbReference>
<dbReference type="NCBIfam" id="TIGR00088">
    <property type="entry name" value="trmD"/>
    <property type="match status" value="1"/>
</dbReference>
<dbReference type="PANTHER" id="PTHR46417">
    <property type="entry name" value="TRNA (GUANINE-N(1)-)-METHYLTRANSFERASE"/>
    <property type="match status" value="1"/>
</dbReference>
<dbReference type="PANTHER" id="PTHR46417:SF1">
    <property type="entry name" value="TRNA (GUANINE-N(1)-)-METHYLTRANSFERASE"/>
    <property type="match status" value="1"/>
</dbReference>
<dbReference type="Pfam" id="PF01746">
    <property type="entry name" value="tRNA_m1G_MT"/>
    <property type="match status" value="1"/>
</dbReference>
<dbReference type="PIRSF" id="PIRSF000386">
    <property type="entry name" value="tRNA_mtase"/>
    <property type="match status" value="1"/>
</dbReference>
<dbReference type="SUPFAM" id="SSF75217">
    <property type="entry name" value="alpha/beta knot"/>
    <property type="match status" value="1"/>
</dbReference>
<feature type="chain" id="PRO_0000060432" description="tRNA (guanine-N(1)-)-methyltransferase">
    <location>
        <begin position="1"/>
        <end position="239"/>
    </location>
</feature>
<feature type="binding site" evidence="1">
    <location>
        <position position="113"/>
    </location>
    <ligand>
        <name>S-adenosyl-L-methionine</name>
        <dbReference type="ChEBI" id="CHEBI:59789"/>
    </ligand>
</feature>
<feature type="binding site" evidence="1">
    <location>
        <begin position="137"/>
        <end position="142"/>
    </location>
    <ligand>
        <name>S-adenosyl-L-methionine</name>
        <dbReference type="ChEBI" id="CHEBI:59789"/>
    </ligand>
</feature>
<protein>
    <recommendedName>
        <fullName evidence="1">tRNA (guanine-N(1)-)-methyltransferase</fullName>
        <ecNumber evidence="1">2.1.1.228</ecNumber>
    </recommendedName>
    <alternativeName>
        <fullName evidence="1">M1G-methyltransferase</fullName>
    </alternativeName>
    <alternativeName>
        <fullName evidence="1">tRNA [GM37] methyltransferase</fullName>
    </alternativeName>
</protein>
<reference key="1">
    <citation type="journal article" date="2004" name="Science">
        <title>The complete genome sequence of Propionibacterium acnes, a commensal of human skin.</title>
        <authorList>
            <person name="Brueggemann H."/>
            <person name="Henne A."/>
            <person name="Hoster F."/>
            <person name="Liesegang H."/>
            <person name="Wiezer A."/>
            <person name="Strittmatter A."/>
            <person name="Hujer S."/>
            <person name="Duerre P."/>
            <person name="Gottschalk G."/>
        </authorList>
    </citation>
    <scope>NUCLEOTIDE SEQUENCE [LARGE SCALE GENOMIC DNA]</scope>
    <source>
        <strain>DSM 16379 / KPA171202</strain>
    </source>
</reference>
<gene>
    <name evidence="1" type="primary">trmD</name>
    <name type="ordered locus">PPA1440</name>
</gene>
<comment type="function">
    <text evidence="1">Specifically methylates guanosine-37 in various tRNAs.</text>
</comment>
<comment type="catalytic activity">
    <reaction evidence="1">
        <text>guanosine(37) in tRNA + S-adenosyl-L-methionine = N(1)-methylguanosine(37) in tRNA + S-adenosyl-L-homocysteine + H(+)</text>
        <dbReference type="Rhea" id="RHEA:36899"/>
        <dbReference type="Rhea" id="RHEA-COMP:10145"/>
        <dbReference type="Rhea" id="RHEA-COMP:10147"/>
        <dbReference type="ChEBI" id="CHEBI:15378"/>
        <dbReference type="ChEBI" id="CHEBI:57856"/>
        <dbReference type="ChEBI" id="CHEBI:59789"/>
        <dbReference type="ChEBI" id="CHEBI:73542"/>
        <dbReference type="ChEBI" id="CHEBI:74269"/>
        <dbReference type="EC" id="2.1.1.228"/>
    </reaction>
</comment>
<comment type="subunit">
    <text evidence="1">Homodimer.</text>
</comment>
<comment type="subcellular location">
    <subcellularLocation>
        <location evidence="1">Cytoplasm</location>
    </subcellularLocation>
</comment>
<comment type="similarity">
    <text evidence="1">Belongs to the RNA methyltransferase TrmD family.</text>
</comment>
<evidence type="ECO:0000255" key="1">
    <source>
        <dbReference type="HAMAP-Rule" id="MF_00605"/>
    </source>
</evidence>